<dbReference type="EMBL" id="CP001138">
    <property type="protein sequence ID" value="ACH49447.1"/>
    <property type="molecule type" value="Genomic_DNA"/>
</dbReference>
<dbReference type="RefSeq" id="WP_001195023.1">
    <property type="nucleotide sequence ID" value="NC_011149.1"/>
</dbReference>
<dbReference type="SMR" id="B5EXM8"/>
<dbReference type="KEGG" id="sea:SeAg_B0531"/>
<dbReference type="HOGENOM" id="CLU_060739_1_2_6"/>
<dbReference type="Proteomes" id="UP000008819">
    <property type="component" value="Chromosome"/>
</dbReference>
<dbReference type="GO" id="GO:0003677">
    <property type="term" value="F:DNA binding"/>
    <property type="evidence" value="ECO:0007669"/>
    <property type="project" value="UniProtKB-UniRule"/>
</dbReference>
<dbReference type="GO" id="GO:0008270">
    <property type="term" value="F:zinc ion binding"/>
    <property type="evidence" value="ECO:0007669"/>
    <property type="project" value="UniProtKB-KW"/>
</dbReference>
<dbReference type="GO" id="GO:0006310">
    <property type="term" value="P:DNA recombination"/>
    <property type="evidence" value="ECO:0007669"/>
    <property type="project" value="UniProtKB-UniRule"/>
</dbReference>
<dbReference type="GO" id="GO:0006281">
    <property type="term" value="P:DNA repair"/>
    <property type="evidence" value="ECO:0007669"/>
    <property type="project" value="UniProtKB-UniRule"/>
</dbReference>
<dbReference type="CDD" id="cd01025">
    <property type="entry name" value="TOPRIM_recR"/>
    <property type="match status" value="1"/>
</dbReference>
<dbReference type="FunFam" id="1.10.8.420:FF:000001">
    <property type="entry name" value="Recombination protein RecR"/>
    <property type="match status" value="1"/>
</dbReference>
<dbReference type="FunFam" id="3.40.1360.10:FF:000001">
    <property type="entry name" value="Recombination protein RecR"/>
    <property type="match status" value="1"/>
</dbReference>
<dbReference type="Gene3D" id="3.40.1360.10">
    <property type="match status" value="1"/>
</dbReference>
<dbReference type="Gene3D" id="6.10.250.240">
    <property type="match status" value="1"/>
</dbReference>
<dbReference type="Gene3D" id="1.10.8.420">
    <property type="entry name" value="RecR Domain 1"/>
    <property type="match status" value="1"/>
</dbReference>
<dbReference type="HAMAP" id="MF_00017">
    <property type="entry name" value="RecR"/>
    <property type="match status" value="1"/>
</dbReference>
<dbReference type="InterPro" id="IPR000093">
    <property type="entry name" value="DNA_Rcmb_RecR"/>
</dbReference>
<dbReference type="InterPro" id="IPR023627">
    <property type="entry name" value="Rcmb_RecR"/>
</dbReference>
<dbReference type="InterPro" id="IPR015967">
    <property type="entry name" value="Rcmb_RecR_Znf"/>
</dbReference>
<dbReference type="InterPro" id="IPR006171">
    <property type="entry name" value="TOPRIM_dom"/>
</dbReference>
<dbReference type="InterPro" id="IPR034137">
    <property type="entry name" value="TOPRIM_RecR"/>
</dbReference>
<dbReference type="NCBIfam" id="TIGR00615">
    <property type="entry name" value="recR"/>
    <property type="match status" value="1"/>
</dbReference>
<dbReference type="PANTHER" id="PTHR30446">
    <property type="entry name" value="RECOMBINATION PROTEIN RECR"/>
    <property type="match status" value="1"/>
</dbReference>
<dbReference type="PANTHER" id="PTHR30446:SF0">
    <property type="entry name" value="RECOMBINATION PROTEIN RECR"/>
    <property type="match status" value="1"/>
</dbReference>
<dbReference type="Pfam" id="PF21175">
    <property type="entry name" value="RecR_C"/>
    <property type="match status" value="1"/>
</dbReference>
<dbReference type="Pfam" id="PF21176">
    <property type="entry name" value="RecR_HhH"/>
    <property type="match status" value="1"/>
</dbReference>
<dbReference type="Pfam" id="PF02132">
    <property type="entry name" value="RecR_ZnF"/>
    <property type="match status" value="1"/>
</dbReference>
<dbReference type="Pfam" id="PF13662">
    <property type="entry name" value="Toprim_4"/>
    <property type="match status" value="1"/>
</dbReference>
<dbReference type="SMART" id="SM00493">
    <property type="entry name" value="TOPRIM"/>
    <property type="match status" value="1"/>
</dbReference>
<dbReference type="SUPFAM" id="SSF111304">
    <property type="entry name" value="Recombination protein RecR"/>
    <property type="match status" value="1"/>
</dbReference>
<dbReference type="PROSITE" id="PS01300">
    <property type="entry name" value="RECR"/>
    <property type="match status" value="1"/>
</dbReference>
<dbReference type="PROSITE" id="PS50880">
    <property type="entry name" value="TOPRIM"/>
    <property type="match status" value="1"/>
</dbReference>
<accession>B5EXM8</accession>
<proteinExistence type="inferred from homology"/>
<protein>
    <recommendedName>
        <fullName evidence="1">Recombination protein RecR</fullName>
    </recommendedName>
</protein>
<sequence>MQTSPLLTQLMEALRCLPGVGPKSAQRMAFTLLQRDRSGGMRLAQALTRAMSEIGHCADCRTFTEQDVCNICSNPRRQENGQICVVESPADIYAIEQTGQFSGRYFVLMGHLSPLDGIGPDDIGLDRLEQRLASEKISELILATNPTVEGEATANYIAELCAEAGVEASRIAHGVPVGGELEMVDGTTLSHSLAGRHKIIF</sequence>
<comment type="function">
    <text evidence="1">May play a role in DNA repair. It seems to be involved in an RecBC-independent recombinational process of DNA repair. It may act with RecF and RecO.</text>
</comment>
<comment type="similarity">
    <text evidence="1">Belongs to the RecR family.</text>
</comment>
<name>RECR_SALA4</name>
<feature type="chain" id="PRO_1000089762" description="Recombination protein RecR">
    <location>
        <begin position="1"/>
        <end position="201"/>
    </location>
</feature>
<feature type="domain" description="Toprim" evidence="1">
    <location>
        <begin position="81"/>
        <end position="176"/>
    </location>
</feature>
<feature type="zinc finger region" description="C4-type" evidence="1">
    <location>
        <begin position="57"/>
        <end position="72"/>
    </location>
</feature>
<gene>
    <name evidence="1" type="primary">recR</name>
    <name type="ordered locus">SeAg_B0531</name>
</gene>
<organism>
    <name type="scientific">Salmonella agona (strain SL483)</name>
    <dbReference type="NCBI Taxonomy" id="454166"/>
    <lineage>
        <taxon>Bacteria</taxon>
        <taxon>Pseudomonadati</taxon>
        <taxon>Pseudomonadota</taxon>
        <taxon>Gammaproteobacteria</taxon>
        <taxon>Enterobacterales</taxon>
        <taxon>Enterobacteriaceae</taxon>
        <taxon>Salmonella</taxon>
    </lineage>
</organism>
<evidence type="ECO:0000255" key="1">
    <source>
        <dbReference type="HAMAP-Rule" id="MF_00017"/>
    </source>
</evidence>
<reference key="1">
    <citation type="journal article" date="2011" name="J. Bacteriol.">
        <title>Comparative genomics of 28 Salmonella enterica isolates: evidence for CRISPR-mediated adaptive sublineage evolution.</title>
        <authorList>
            <person name="Fricke W.F."/>
            <person name="Mammel M.K."/>
            <person name="McDermott P.F."/>
            <person name="Tartera C."/>
            <person name="White D.G."/>
            <person name="Leclerc J.E."/>
            <person name="Ravel J."/>
            <person name="Cebula T.A."/>
        </authorList>
    </citation>
    <scope>NUCLEOTIDE SEQUENCE [LARGE SCALE GENOMIC DNA]</scope>
    <source>
        <strain>SL483</strain>
    </source>
</reference>
<keyword id="KW-0227">DNA damage</keyword>
<keyword id="KW-0233">DNA recombination</keyword>
<keyword id="KW-0234">DNA repair</keyword>
<keyword id="KW-0479">Metal-binding</keyword>
<keyword id="KW-0862">Zinc</keyword>
<keyword id="KW-0863">Zinc-finger</keyword>